<protein>
    <recommendedName>
        <fullName evidence="2">Probable translation initiation factor IF-2</fullName>
    </recommendedName>
</protein>
<evidence type="ECO:0000250" key="1"/>
<evidence type="ECO:0000255" key="2">
    <source>
        <dbReference type="HAMAP-Rule" id="MF_00100"/>
    </source>
</evidence>
<comment type="function">
    <text evidence="2">Function in general translation initiation by promoting the binding of the formylmethionine-tRNA to ribosomes. Seems to function along with eIF-2.</text>
</comment>
<comment type="similarity">
    <text evidence="2">Belongs to the TRAFAC class translation factor GTPase superfamily. Classic translation factor GTPase family. IF-2 subfamily.</text>
</comment>
<sequence>METKSSTSLPAKKLRQPIVCVLGHVDHGKTTLLDIIRGTAVANKEPGGITQRIAATTVDINKILKATEKLNNKGMKIPGLLFIDTPGHVAFSNMRARGGALADIAVLVIDINEGIMPQTVESIDILKKFKTPFIIAANKIDLIPFFTDVKTNLFTEFIRKQRQEYVNELDARIYNIVNKLYEYGLNSDRFDRISDFTKTIAIVPVSAKKNIGVPEILMVLAGLAQRFLESEIEYKDINGHATIIEVRREESAGIALDAVLYQGTISVGDTVAVNTKTGPVTTKVKALFVNTGKSQRSLKEVETVSAAEGIRVLISDKLDVISGSPLIVVKGNMEQVMKEIEEASKVDIPLDENGIYVKAEAIGSLEAISYELNKQGIKIRAAAVGDITKRDVMDVQTLQDPLNRIIIGFNVSILPEAKDAIESSDVGVITGDIIYKIVEDTQKWIEERKKQLSQKRKEAMPVPAKIRILPQYIFRASKPVIVGIRVETGQIKVGDNLIRSDGKYAGTIKSIRNDEVSVRYQDAPAEVAVAIDNVTLNRQIFPDDVLYVDIPESVVKELRKAPMEKEIMDTLEEIIKIKRKENPFWGTKV</sequence>
<gene>
    <name evidence="2" type="primary">infB</name>
    <name type="ordered locus">TV0451</name>
    <name type="ORF">TVG0440169</name>
</gene>
<name>IF2P_THEVO</name>
<accession>Q97BK4</accession>
<dbReference type="EMBL" id="BA000011">
    <property type="protein sequence ID" value="BAB59593.1"/>
    <property type="molecule type" value="Genomic_DNA"/>
</dbReference>
<dbReference type="RefSeq" id="WP_010916711.1">
    <property type="nucleotide sequence ID" value="NC_002689.2"/>
</dbReference>
<dbReference type="SMR" id="Q97BK4"/>
<dbReference type="STRING" id="273116.gene:9381232"/>
<dbReference type="PaxDb" id="273116-14324666"/>
<dbReference type="GeneID" id="1440969"/>
<dbReference type="KEGG" id="tvo:TVG0440169"/>
<dbReference type="eggNOG" id="arCOG01560">
    <property type="taxonomic scope" value="Archaea"/>
</dbReference>
<dbReference type="HOGENOM" id="CLU_002656_3_3_2"/>
<dbReference type="OrthoDB" id="30957at2157"/>
<dbReference type="PhylomeDB" id="Q97BK4"/>
<dbReference type="Proteomes" id="UP000001017">
    <property type="component" value="Chromosome"/>
</dbReference>
<dbReference type="GO" id="GO:0005737">
    <property type="term" value="C:cytoplasm"/>
    <property type="evidence" value="ECO:0007669"/>
    <property type="project" value="TreeGrafter"/>
</dbReference>
<dbReference type="GO" id="GO:0005525">
    <property type="term" value="F:GTP binding"/>
    <property type="evidence" value="ECO:0007669"/>
    <property type="project" value="UniProtKB-KW"/>
</dbReference>
<dbReference type="GO" id="GO:0003924">
    <property type="term" value="F:GTPase activity"/>
    <property type="evidence" value="ECO:0007669"/>
    <property type="project" value="UniProtKB-UniRule"/>
</dbReference>
<dbReference type="GO" id="GO:0003743">
    <property type="term" value="F:translation initiation factor activity"/>
    <property type="evidence" value="ECO:0007669"/>
    <property type="project" value="UniProtKB-UniRule"/>
</dbReference>
<dbReference type="CDD" id="cd16266">
    <property type="entry name" value="IF2_aeIF5B_IV"/>
    <property type="match status" value="1"/>
</dbReference>
<dbReference type="CDD" id="cd01887">
    <property type="entry name" value="IF2_eIF5B"/>
    <property type="match status" value="1"/>
</dbReference>
<dbReference type="FunFam" id="3.40.50.300:FF:000112">
    <property type="entry name" value="Eukaryotic translation initiation factor 5B"/>
    <property type="match status" value="1"/>
</dbReference>
<dbReference type="FunFam" id="3.40.50.10050:FF:000001">
    <property type="entry name" value="Translation initiation factor IF-2"/>
    <property type="match status" value="1"/>
</dbReference>
<dbReference type="Gene3D" id="3.40.50.300">
    <property type="entry name" value="P-loop containing nucleotide triphosphate hydrolases"/>
    <property type="match status" value="1"/>
</dbReference>
<dbReference type="Gene3D" id="2.40.30.10">
    <property type="entry name" value="Translation factors"/>
    <property type="match status" value="2"/>
</dbReference>
<dbReference type="Gene3D" id="3.40.50.10050">
    <property type="entry name" value="Translation initiation factor IF- 2, domain 3"/>
    <property type="match status" value="1"/>
</dbReference>
<dbReference type="HAMAP" id="MF_00100_A">
    <property type="entry name" value="IF_2_A"/>
    <property type="match status" value="1"/>
</dbReference>
<dbReference type="InterPro" id="IPR029459">
    <property type="entry name" value="EFTU-type"/>
</dbReference>
<dbReference type="InterPro" id="IPR027417">
    <property type="entry name" value="P-loop_NTPase"/>
</dbReference>
<dbReference type="InterPro" id="IPR005225">
    <property type="entry name" value="Small_GTP-bd"/>
</dbReference>
<dbReference type="InterPro" id="IPR000795">
    <property type="entry name" value="T_Tr_GTP-bd_dom"/>
</dbReference>
<dbReference type="InterPro" id="IPR004544">
    <property type="entry name" value="TF_aIF-2_arc"/>
</dbReference>
<dbReference type="InterPro" id="IPR015760">
    <property type="entry name" value="TIF_IF2"/>
</dbReference>
<dbReference type="InterPro" id="IPR023115">
    <property type="entry name" value="TIF_IF2_dom3"/>
</dbReference>
<dbReference type="InterPro" id="IPR036925">
    <property type="entry name" value="TIF_IF2_dom3_sf"/>
</dbReference>
<dbReference type="InterPro" id="IPR009000">
    <property type="entry name" value="Transl_B-barrel_sf"/>
</dbReference>
<dbReference type="NCBIfam" id="TIGR00491">
    <property type="entry name" value="aIF-2"/>
    <property type="match status" value="1"/>
</dbReference>
<dbReference type="NCBIfam" id="NF003078">
    <property type="entry name" value="PRK04004.1"/>
    <property type="match status" value="1"/>
</dbReference>
<dbReference type="NCBIfam" id="TIGR00231">
    <property type="entry name" value="small_GTP"/>
    <property type="match status" value="1"/>
</dbReference>
<dbReference type="PANTHER" id="PTHR43381:SF4">
    <property type="entry name" value="EUKARYOTIC TRANSLATION INITIATION FACTOR 5B"/>
    <property type="match status" value="1"/>
</dbReference>
<dbReference type="PANTHER" id="PTHR43381">
    <property type="entry name" value="TRANSLATION INITIATION FACTOR IF-2-RELATED"/>
    <property type="match status" value="1"/>
</dbReference>
<dbReference type="Pfam" id="PF00009">
    <property type="entry name" value="GTP_EFTU"/>
    <property type="match status" value="1"/>
</dbReference>
<dbReference type="Pfam" id="PF14578">
    <property type="entry name" value="GTP_EFTU_D4"/>
    <property type="match status" value="1"/>
</dbReference>
<dbReference type="Pfam" id="PF11987">
    <property type="entry name" value="IF-2"/>
    <property type="match status" value="1"/>
</dbReference>
<dbReference type="PRINTS" id="PR00315">
    <property type="entry name" value="ELONGATNFCT"/>
</dbReference>
<dbReference type="SUPFAM" id="SSF52156">
    <property type="entry name" value="Initiation factor IF2/eIF5b, domain 3"/>
    <property type="match status" value="1"/>
</dbReference>
<dbReference type="SUPFAM" id="SSF52540">
    <property type="entry name" value="P-loop containing nucleoside triphosphate hydrolases"/>
    <property type="match status" value="1"/>
</dbReference>
<dbReference type="SUPFAM" id="SSF50447">
    <property type="entry name" value="Translation proteins"/>
    <property type="match status" value="1"/>
</dbReference>
<dbReference type="PROSITE" id="PS51722">
    <property type="entry name" value="G_TR_2"/>
    <property type="match status" value="1"/>
</dbReference>
<proteinExistence type="inferred from homology"/>
<keyword id="KW-0342">GTP-binding</keyword>
<keyword id="KW-0396">Initiation factor</keyword>
<keyword id="KW-0547">Nucleotide-binding</keyword>
<keyword id="KW-0648">Protein biosynthesis</keyword>
<feature type="chain" id="PRO_0000137311" description="Probable translation initiation factor IF-2">
    <location>
        <begin position="1"/>
        <end position="589"/>
    </location>
</feature>
<feature type="domain" description="tr-type G">
    <location>
        <begin position="14"/>
        <end position="231"/>
    </location>
</feature>
<feature type="region of interest" description="G1" evidence="1">
    <location>
        <begin position="23"/>
        <end position="30"/>
    </location>
</feature>
<feature type="region of interest" description="G2" evidence="1">
    <location>
        <begin position="48"/>
        <end position="52"/>
    </location>
</feature>
<feature type="region of interest" description="G3" evidence="1">
    <location>
        <begin position="84"/>
        <end position="87"/>
    </location>
</feature>
<feature type="region of interest" description="G4" evidence="1">
    <location>
        <begin position="138"/>
        <end position="141"/>
    </location>
</feature>
<feature type="region of interest" description="G5" evidence="1">
    <location>
        <begin position="206"/>
        <end position="208"/>
    </location>
</feature>
<feature type="binding site" evidence="2">
    <location>
        <begin position="23"/>
        <end position="30"/>
    </location>
    <ligand>
        <name>GTP</name>
        <dbReference type="ChEBI" id="CHEBI:37565"/>
    </ligand>
</feature>
<feature type="binding site" evidence="2">
    <location>
        <begin position="84"/>
        <end position="88"/>
    </location>
    <ligand>
        <name>GTP</name>
        <dbReference type="ChEBI" id="CHEBI:37565"/>
    </ligand>
</feature>
<feature type="binding site" evidence="2">
    <location>
        <begin position="138"/>
        <end position="141"/>
    </location>
    <ligand>
        <name>GTP</name>
        <dbReference type="ChEBI" id="CHEBI:37565"/>
    </ligand>
</feature>
<organism>
    <name type="scientific">Thermoplasma volcanium (strain ATCC 51530 / DSM 4299 / JCM 9571 / NBRC 15438 / GSS1)</name>
    <dbReference type="NCBI Taxonomy" id="273116"/>
    <lineage>
        <taxon>Archaea</taxon>
        <taxon>Methanobacteriati</taxon>
        <taxon>Thermoplasmatota</taxon>
        <taxon>Thermoplasmata</taxon>
        <taxon>Thermoplasmatales</taxon>
        <taxon>Thermoplasmataceae</taxon>
        <taxon>Thermoplasma</taxon>
    </lineage>
</organism>
<reference key="1">
    <citation type="journal article" date="2000" name="Proc. Natl. Acad. Sci. U.S.A.">
        <title>Archaeal adaptation to higher temperatures revealed by genomic sequence of Thermoplasma volcanium.</title>
        <authorList>
            <person name="Kawashima T."/>
            <person name="Amano N."/>
            <person name="Koike H."/>
            <person name="Makino S."/>
            <person name="Higuchi S."/>
            <person name="Kawashima-Ohya Y."/>
            <person name="Watanabe K."/>
            <person name="Yamazaki M."/>
            <person name="Kanehori K."/>
            <person name="Kawamoto T."/>
            <person name="Nunoshiba T."/>
            <person name="Yamamoto Y."/>
            <person name="Aramaki H."/>
            <person name="Makino K."/>
            <person name="Suzuki M."/>
        </authorList>
    </citation>
    <scope>NUCLEOTIDE SEQUENCE [LARGE SCALE GENOMIC DNA]</scope>
    <source>
        <strain>ATCC 51530 / DSM 4299 / JCM 9571 / NBRC 15438 / GSS1</strain>
    </source>
</reference>